<dbReference type="EMBL" id="CP001348">
    <property type="protein sequence ID" value="ACL76147.1"/>
    <property type="molecule type" value="Genomic_DNA"/>
</dbReference>
<dbReference type="RefSeq" id="WP_015925262.1">
    <property type="nucleotide sequence ID" value="NC_011898.1"/>
</dbReference>
<dbReference type="SMR" id="B8I304"/>
<dbReference type="STRING" id="394503.Ccel_1797"/>
<dbReference type="KEGG" id="cce:Ccel_1797"/>
<dbReference type="eggNOG" id="COG0484">
    <property type="taxonomic scope" value="Bacteria"/>
</dbReference>
<dbReference type="HOGENOM" id="CLU_017633_0_7_9"/>
<dbReference type="OrthoDB" id="9779889at2"/>
<dbReference type="Proteomes" id="UP000001349">
    <property type="component" value="Chromosome"/>
</dbReference>
<dbReference type="GO" id="GO:0005737">
    <property type="term" value="C:cytoplasm"/>
    <property type="evidence" value="ECO:0007669"/>
    <property type="project" value="UniProtKB-SubCell"/>
</dbReference>
<dbReference type="GO" id="GO:0005524">
    <property type="term" value="F:ATP binding"/>
    <property type="evidence" value="ECO:0007669"/>
    <property type="project" value="InterPro"/>
</dbReference>
<dbReference type="GO" id="GO:0031072">
    <property type="term" value="F:heat shock protein binding"/>
    <property type="evidence" value="ECO:0007669"/>
    <property type="project" value="InterPro"/>
</dbReference>
<dbReference type="GO" id="GO:0051082">
    <property type="term" value="F:unfolded protein binding"/>
    <property type="evidence" value="ECO:0007669"/>
    <property type="project" value="UniProtKB-UniRule"/>
</dbReference>
<dbReference type="GO" id="GO:0008270">
    <property type="term" value="F:zinc ion binding"/>
    <property type="evidence" value="ECO:0007669"/>
    <property type="project" value="UniProtKB-UniRule"/>
</dbReference>
<dbReference type="GO" id="GO:0051085">
    <property type="term" value="P:chaperone cofactor-dependent protein refolding"/>
    <property type="evidence" value="ECO:0007669"/>
    <property type="project" value="TreeGrafter"/>
</dbReference>
<dbReference type="GO" id="GO:0006260">
    <property type="term" value="P:DNA replication"/>
    <property type="evidence" value="ECO:0007669"/>
    <property type="project" value="UniProtKB-KW"/>
</dbReference>
<dbReference type="GO" id="GO:0042026">
    <property type="term" value="P:protein refolding"/>
    <property type="evidence" value="ECO:0007669"/>
    <property type="project" value="TreeGrafter"/>
</dbReference>
<dbReference type="GO" id="GO:0009408">
    <property type="term" value="P:response to heat"/>
    <property type="evidence" value="ECO:0007669"/>
    <property type="project" value="InterPro"/>
</dbReference>
<dbReference type="CDD" id="cd06257">
    <property type="entry name" value="DnaJ"/>
    <property type="match status" value="1"/>
</dbReference>
<dbReference type="CDD" id="cd10747">
    <property type="entry name" value="DnaJ_C"/>
    <property type="match status" value="1"/>
</dbReference>
<dbReference type="CDD" id="cd10719">
    <property type="entry name" value="DnaJ_zf"/>
    <property type="match status" value="1"/>
</dbReference>
<dbReference type="FunFam" id="1.10.287.110:FF:000031">
    <property type="entry name" value="Molecular chaperone DnaJ"/>
    <property type="match status" value="1"/>
</dbReference>
<dbReference type="FunFam" id="2.10.230.10:FF:000002">
    <property type="entry name" value="Molecular chaperone DnaJ"/>
    <property type="match status" value="1"/>
</dbReference>
<dbReference type="FunFam" id="2.60.260.20:FF:000004">
    <property type="entry name" value="Molecular chaperone DnaJ"/>
    <property type="match status" value="1"/>
</dbReference>
<dbReference type="Gene3D" id="1.10.287.110">
    <property type="entry name" value="DnaJ domain"/>
    <property type="match status" value="1"/>
</dbReference>
<dbReference type="Gene3D" id="2.10.230.10">
    <property type="entry name" value="Heat shock protein DnaJ, cysteine-rich domain"/>
    <property type="match status" value="1"/>
</dbReference>
<dbReference type="Gene3D" id="2.60.260.20">
    <property type="entry name" value="Urease metallochaperone UreE, N-terminal domain"/>
    <property type="match status" value="2"/>
</dbReference>
<dbReference type="HAMAP" id="MF_01152">
    <property type="entry name" value="DnaJ"/>
    <property type="match status" value="1"/>
</dbReference>
<dbReference type="InterPro" id="IPR012724">
    <property type="entry name" value="DnaJ"/>
</dbReference>
<dbReference type="InterPro" id="IPR002939">
    <property type="entry name" value="DnaJ_C"/>
</dbReference>
<dbReference type="InterPro" id="IPR001623">
    <property type="entry name" value="DnaJ_domain"/>
</dbReference>
<dbReference type="InterPro" id="IPR018253">
    <property type="entry name" value="DnaJ_domain_CS"/>
</dbReference>
<dbReference type="InterPro" id="IPR008971">
    <property type="entry name" value="HSP40/DnaJ_pept-bd"/>
</dbReference>
<dbReference type="InterPro" id="IPR001305">
    <property type="entry name" value="HSP_DnaJ_Cys-rich_dom"/>
</dbReference>
<dbReference type="InterPro" id="IPR036410">
    <property type="entry name" value="HSP_DnaJ_Cys-rich_dom_sf"/>
</dbReference>
<dbReference type="InterPro" id="IPR036869">
    <property type="entry name" value="J_dom_sf"/>
</dbReference>
<dbReference type="NCBIfam" id="TIGR02349">
    <property type="entry name" value="DnaJ_bact"/>
    <property type="match status" value="1"/>
</dbReference>
<dbReference type="NCBIfam" id="NF008035">
    <property type="entry name" value="PRK10767.1"/>
    <property type="match status" value="1"/>
</dbReference>
<dbReference type="NCBIfam" id="NF010870">
    <property type="entry name" value="PRK14277.1"/>
    <property type="match status" value="1"/>
</dbReference>
<dbReference type="PANTHER" id="PTHR43096:SF48">
    <property type="entry name" value="CHAPERONE PROTEIN DNAJ"/>
    <property type="match status" value="1"/>
</dbReference>
<dbReference type="PANTHER" id="PTHR43096">
    <property type="entry name" value="DNAJ HOMOLOG 1, MITOCHONDRIAL-RELATED"/>
    <property type="match status" value="1"/>
</dbReference>
<dbReference type="Pfam" id="PF00226">
    <property type="entry name" value="DnaJ"/>
    <property type="match status" value="1"/>
</dbReference>
<dbReference type="Pfam" id="PF01556">
    <property type="entry name" value="DnaJ_C"/>
    <property type="match status" value="1"/>
</dbReference>
<dbReference type="Pfam" id="PF00684">
    <property type="entry name" value="DnaJ_CXXCXGXG"/>
    <property type="match status" value="1"/>
</dbReference>
<dbReference type="PRINTS" id="PR00625">
    <property type="entry name" value="JDOMAIN"/>
</dbReference>
<dbReference type="SMART" id="SM00271">
    <property type="entry name" value="DnaJ"/>
    <property type="match status" value="1"/>
</dbReference>
<dbReference type="SUPFAM" id="SSF46565">
    <property type="entry name" value="Chaperone J-domain"/>
    <property type="match status" value="1"/>
</dbReference>
<dbReference type="SUPFAM" id="SSF57938">
    <property type="entry name" value="DnaJ/Hsp40 cysteine-rich domain"/>
    <property type="match status" value="1"/>
</dbReference>
<dbReference type="SUPFAM" id="SSF49493">
    <property type="entry name" value="HSP40/DnaJ peptide-binding domain"/>
    <property type="match status" value="2"/>
</dbReference>
<dbReference type="PROSITE" id="PS00636">
    <property type="entry name" value="DNAJ_1"/>
    <property type="match status" value="1"/>
</dbReference>
<dbReference type="PROSITE" id="PS50076">
    <property type="entry name" value="DNAJ_2"/>
    <property type="match status" value="1"/>
</dbReference>
<dbReference type="PROSITE" id="PS51188">
    <property type="entry name" value="ZF_CR"/>
    <property type="match status" value="1"/>
</dbReference>
<protein>
    <recommendedName>
        <fullName evidence="1">Chaperone protein DnaJ</fullName>
    </recommendedName>
</protein>
<reference key="1">
    <citation type="submission" date="2009-01" db="EMBL/GenBank/DDBJ databases">
        <title>Complete sequence of Clostridium cellulolyticum H10.</title>
        <authorList>
            <consortium name="US DOE Joint Genome Institute"/>
            <person name="Lucas S."/>
            <person name="Copeland A."/>
            <person name="Lapidus A."/>
            <person name="Glavina del Rio T."/>
            <person name="Dalin E."/>
            <person name="Tice H."/>
            <person name="Bruce D."/>
            <person name="Goodwin L."/>
            <person name="Pitluck S."/>
            <person name="Chertkov O."/>
            <person name="Saunders E."/>
            <person name="Brettin T."/>
            <person name="Detter J.C."/>
            <person name="Han C."/>
            <person name="Larimer F."/>
            <person name="Land M."/>
            <person name="Hauser L."/>
            <person name="Kyrpides N."/>
            <person name="Ivanova N."/>
            <person name="Zhou J."/>
            <person name="Richardson P."/>
        </authorList>
    </citation>
    <scope>NUCLEOTIDE SEQUENCE [LARGE SCALE GENOMIC DNA]</scope>
    <source>
        <strain>ATCC 35319 / DSM 5812 / JCM 6584 / H10</strain>
    </source>
</reference>
<accession>B8I304</accession>
<comment type="function">
    <text evidence="1">Participates actively in the response to hyperosmotic and heat shock by preventing the aggregation of stress-denatured proteins and by disaggregating proteins, also in an autonomous, DnaK-independent fashion. Unfolded proteins bind initially to DnaJ; upon interaction with the DnaJ-bound protein, DnaK hydrolyzes its bound ATP, resulting in the formation of a stable complex. GrpE releases ADP from DnaK; ATP binding to DnaK triggers the release of the substrate protein, thus completing the reaction cycle. Several rounds of ATP-dependent interactions between DnaJ, DnaK and GrpE are required for fully efficient folding. Also involved, together with DnaK and GrpE, in the DNA replication of plasmids through activation of initiation proteins.</text>
</comment>
<comment type="cofactor">
    <cofactor evidence="1">
        <name>Zn(2+)</name>
        <dbReference type="ChEBI" id="CHEBI:29105"/>
    </cofactor>
    <text evidence="1">Binds 2 Zn(2+) ions per monomer.</text>
</comment>
<comment type="subunit">
    <text evidence="1">Homodimer.</text>
</comment>
<comment type="subcellular location">
    <subcellularLocation>
        <location evidence="1">Cytoplasm</location>
    </subcellularLocation>
</comment>
<comment type="domain">
    <text evidence="1">The J domain is necessary and sufficient to stimulate DnaK ATPase activity. Zinc center 1 plays an important role in the autonomous, DnaK-independent chaperone activity of DnaJ. Zinc center 2 is essential for interaction with DnaK and for DnaJ activity.</text>
</comment>
<comment type="similarity">
    <text evidence="1">Belongs to the DnaJ family.</text>
</comment>
<name>DNAJ_RUMCH</name>
<keyword id="KW-0143">Chaperone</keyword>
<keyword id="KW-0963">Cytoplasm</keyword>
<keyword id="KW-0235">DNA replication</keyword>
<keyword id="KW-0479">Metal-binding</keyword>
<keyword id="KW-1185">Reference proteome</keyword>
<keyword id="KW-0677">Repeat</keyword>
<keyword id="KW-0346">Stress response</keyword>
<keyword id="KW-0862">Zinc</keyword>
<keyword id="KW-0863">Zinc-finger</keyword>
<proteinExistence type="inferred from homology"/>
<gene>
    <name evidence="1" type="primary">dnaJ</name>
    <name type="ordered locus">Ccel_1797</name>
</gene>
<evidence type="ECO:0000255" key="1">
    <source>
        <dbReference type="HAMAP-Rule" id="MF_01152"/>
    </source>
</evidence>
<sequence>MADKRDYYEVLGVDKNASDAELKKAYRNLAKKYHPDVNPGDTTAEAKFKEVNEAYEILSDSQKRSRYDQFGHAGTDPNGFGGAGGFSTDFDFGGIGDIFETFFGGSGFGGRSKTRRGPQKGADIKYSTEISFEEAAFGVEREINVSKMEVCSKCTGSGAKPGSNVTTCNHCNGTGQVQIKQNTPFGQFINTKTCDACKGEGKIITEPCPACNGKGRLRSTKKIKIDIPAGIDDGQTISLRGGGDPGVKGGPNGDLYVNIRVKPHPLFTRQGNNVVCEVPITFTQAALGAELEVPTLDGKVKYTVPEGTQTGSVFRLKGKGIPYLRGNGRGDQYVKVNIEVPKKLNDKQKALLREFAEISGDDSHEQRKGFFDKMKDAFK</sequence>
<feature type="chain" id="PRO_1000164252" description="Chaperone protein DnaJ">
    <location>
        <begin position="1"/>
        <end position="379"/>
    </location>
</feature>
<feature type="domain" description="J" evidence="1">
    <location>
        <begin position="6"/>
        <end position="71"/>
    </location>
</feature>
<feature type="repeat" description="CXXCXGXG motif">
    <location>
        <begin position="151"/>
        <end position="158"/>
    </location>
</feature>
<feature type="repeat" description="CXXCXGXG motif">
    <location>
        <begin position="168"/>
        <end position="175"/>
    </location>
</feature>
<feature type="repeat" description="CXXCXGXG motif">
    <location>
        <begin position="194"/>
        <end position="201"/>
    </location>
</feature>
<feature type="repeat" description="CXXCXGXG motif">
    <location>
        <begin position="208"/>
        <end position="215"/>
    </location>
</feature>
<feature type="zinc finger region" description="CR-type" evidence="1">
    <location>
        <begin position="138"/>
        <end position="220"/>
    </location>
</feature>
<feature type="binding site" evidence="1">
    <location>
        <position position="151"/>
    </location>
    <ligand>
        <name>Zn(2+)</name>
        <dbReference type="ChEBI" id="CHEBI:29105"/>
        <label>1</label>
    </ligand>
</feature>
<feature type="binding site" evidence="1">
    <location>
        <position position="154"/>
    </location>
    <ligand>
        <name>Zn(2+)</name>
        <dbReference type="ChEBI" id="CHEBI:29105"/>
        <label>1</label>
    </ligand>
</feature>
<feature type="binding site" evidence="1">
    <location>
        <position position="168"/>
    </location>
    <ligand>
        <name>Zn(2+)</name>
        <dbReference type="ChEBI" id="CHEBI:29105"/>
        <label>2</label>
    </ligand>
</feature>
<feature type="binding site" evidence="1">
    <location>
        <position position="171"/>
    </location>
    <ligand>
        <name>Zn(2+)</name>
        <dbReference type="ChEBI" id="CHEBI:29105"/>
        <label>2</label>
    </ligand>
</feature>
<feature type="binding site" evidence="1">
    <location>
        <position position="194"/>
    </location>
    <ligand>
        <name>Zn(2+)</name>
        <dbReference type="ChEBI" id="CHEBI:29105"/>
        <label>2</label>
    </ligand>
</feature>
<feature type="binding site" evidence="1">
    <location>
        <position position="197"/>
    </location>
    <ligand>
        <name>Zn(2+)</name>
        <dbReference type="ChEBI" id="CHEBI:29105"/>
        <label>2</label>
    </ligand>
</feature>
<feature type="binding site" evidence="1">
    <location>
        <position position="208"/>
    </location>
    <ligand>
        <name>Zn(2+)</name>
        <dbReference type="ChEBI" id="CHEBI:29105"/>
        <label>1</label>
    </ligand>
</feature>
<feature type="binding site" evidence="1">
    <location>
        <position position="211"/>
    </location>
    <ligand>
        <name>Zn(2+)</name>
        <dbReference type="ChEBI" id="CHEBI:29105"/>
        <label>1</label>
    </ligand>
</feature>
<organism>
    <name type="scientific">Ruminiclostridium cellulolyticum (strain ATCC 35319 / DSM 5812 / JCM 6584 / H10)</name>
    <name type="common">Clostridium cellulolyticum</name>
    <dbReference type="NCBI Taxonomy" id="394503"/>
    <lineage>
        <taxon>Bacteria</taxon>
        <taxon>Bacillati</taxon>
        <taxon>Bacillota</taxon>
        <taxon>Clostridia</taxon>
        <taxon>Eubacteriales</taxon>
        <taxon>Oscillospiraceae</taxon>
        <taxon>Ruminiclostridium</taxon>
    </lineage>
</organism>